<feature type="chain" id="PRO_1000198462" description="Probable fructose-6-phosphate aldolase">
    <location>
        <begin position="1"/>
        <end position="222"/>
    </location>
</feature>
<feature type="active site" description="Schiff-base intermediate with substrate" evidence="1">
    <location>
        <position position="87"/>
    </location>
</feature>
<gene>
    <name evidence="1" type="primary">fsa</name>
    <name type="ordered locus">SPN23F02420</name>
</gene>
<comment type="function">
    <text evidence="1">Catalyzes the reversible formation of fructose 6-phosphate from dihydroxyacetone and D-glyceraldehyde 3-phosphate via an aldolization reaction.</text>
</comment>
<comment type="catalytic activity">
    <reaction evidence="1">
        <text>beta-D-fructose 6-phosphate = dihydroxyacetone + D-glyceraldehyde 3-phosphate</text>
        <dbReference type="Rhea" id="RHEA:28002"/>
        <dbReference type="ChEBI" id="CHEBI:16016"/>
        <dbReference type="ChEBI" id="CHEBI:57634"/>
        <dbReference type="ChEBI" id="CHEBI:59776"/>
    </reaction>
</comment>
<comment type="subcellular location">
    <subcellularLocation>
        <location evidence="1">Cytoplasm</location>
    </subcellularLocation>
</comment>
<comment type="similarity">
    <text evidence="1">Belongs to the transaldolase family. Type 3A subfamily.</text>
</comment>
<accession>B8ZKS3</accession>
<keyword id="KW-0119">Carbohydrate metabolism</keyword>
<keyword id="KW-0963">Cytoplasm</keyword>
<keyword id="KW-0456">Lyase</keyword>
<keyword id="KW-0704">Schiff base</keyword>
<proteinExistence type="inferred from homology"/>
<reference key="1">
    <citation type="journal article" date="2009" name="J. Bacteriol.">
        <title>Role of conjugative elements in the evolution of the multidrug-resistant pandemic clone Streptococcus pneumoniae Spain23F ST81.</title>
        <authorList>
            <person name="Croucher N.J."/>
            <person name="Walker D."/>
            <person name="Romero P."/>
            <person name="Lennard N."/>
            <person name="Paterson G.K."/>
            <person name="Bason N.C."/>
            <person name="Mitchell A.M."/>
            <person name="Quail M.A."/>
            <person name="Andrew P.W."/>
            <person name="Parkhill J."/>
            <person name="Bentley S.D."/>
            <person name="Mitchell T.J."/>
        </authorList>
    </citation>
    <scope>NUCLEOTIDE SEQUENCE [LARGE SCALE GENOMIC DNA]</scope>
    <source>
        <strain>ATCC 700669 / Spain 23F-1</strain>
    </source>
</reference>
<dbReference type="EC" id="4.1.2.-" evidence="1"/>
<dbReference type="EMBL" id="FM211187">
    <property type="protein sequence ID" value="CAR68102.1"/>
    <property type="molecule type" value="Genomic_DNA"/>
</dbReference>
<dbReference type="RefSeq" id="WP_000395437.1">
    <property type="nucleotide sequence ID" value="NC_011900.1"/>
</dbReference>
<dbReference type="SMR" id="B8ZKS3"/>
<dbReference type="KEGG" id="sne:SPN23F02420"/>
<dbReference type="HOGENOM" id="CLU_079764_2_0_9"/>
<dbReference type="GO" id="GO:0005737">
    <property type="term" value="C:cytoplasm"/>
    <property type="evidence" value="ECO:0007669"/>
    <property type="project" value="UniProtKB-SubCell"/>
</dbReference>
<dbReference type="GO" id="GO:0097023">
    <property type="term" value="F:fructose 6-phosphate aldolase activity"/>
    <property type="evidence" value="ECO:0007669"/>
    <property type="project" value="RHEA"/>
</dbReference>
<dbReference type="GO" id="GO:0006000">
    <property type="term" value="P:fructose metabolic process"/>
    <property type="evidence" value="ECO:0007669"/>
    <property type="project" value="UniProtKB-UniRule"/>
</dbReference>
<dbReference type="CDD" id="cd00956">
    <property type="entry name" value="Transaldolase_FSA"/>
    <property type="match status" value="1"/>
</dbReference>
<dbReference type="FunFam" id="3.20.20.70:FF:000018">
    <property type="entry name" value="Probable transaldolase"/>
    <property type="match status" value="1"/>
</dbReference>
<dbReference type="Gene3D" id="3.20.20.70">
    <property type="entry name" value="Aldolase class I"/>
    <property type="match status" value="1"/>
</dbReference>
<dbReference type="HAMAP" id="MF_00496">
    <property type="entry name" value="F6P_aldolase"/>
    <property type="match status" value="1"/>
</dbReference>
<dbReference type="InterPro" id="IPR013785">
    <property type="entry name" value="Aldolase_TIM"/>
</dbReference>
<dbReference type="InterPro" id="IPR023001">
    <property type="entry name" value="F6P_aldolase"/>
</dbReference>
<dbReference type="InterPro" id="IPR001585">
    <property type="entry name" value="TAL/FSA"/>
</dbReference>
<dbReference type="InterPro" id="IPR018225">
    <property type="entry name" value="Transaldolase_AS"/>
</dbReference>
<dbReference type="InterPro" id="IPR033919">
    <property type="entry name" value="TSA/FSA_arc/bac"/>
</dbReference>
<dbReference type="NCBIfam" id="NF009299">
    <property type="entry name" value="PRK12656.1"/>
    <property type="match status" value="1"/>
</dbReference>
<dbReference type="PANTHER" id="PTHR10683">
    <property type="entry name" value="TRANSALDOLASE"/>
    <property type="match status" value="1"/>
</dbReference>
<dbReference type="PANTHER" id="PTHR10683:SF28">
    <property type="entry name" value="TRANSALDOLASE C"/>
    <property type="match status" value="1"/>
</dbReference>
<dbReference type="Pfam" id="PF00923">
    <property type="entry name" value="TAL_FSA"/>
    <property type="match status" value="1"/>
</dbReference>
<dbReference type="SUPFAM" id="SSF51569">
    <property type="entry name" value="Aldolase"/>
    <property type="match status" value="1"/>
</dbReference>
<dbReference type="PROSITE" id="PS00958">
    <property type="entry name" value="TRANSALDOLASE_2"/>
    <property type="match status" value="1"/>
</dbReference>
<organism>
    <name type="scientific">Streptococcus pneumoniae (strain ATCC 700669 / Spain 23F-1)</name>
    <dbReference type="NCBI Taxonomy" id="561276"/>
    <lineage>
        <taxon>Bacteria</taxon>
        <taxon>Bacillati</taxon>
        <taxon>Bacillota</taxon>
        <taxon>Bacilli</taxon>
        <taxon>Lactobacillales</taxon>
        <taxon>Streptococcaceae</taxon>
        <taxon>Streptococcus</taxon>
    </lineage>
</organism>
<sequence length="222" mass="24374">MEFMLDTLNLDEIKKWSEILPLAGVTSNPTIAKREGSINFFERIKDVRELIGSTPSIHVQVISQDFEGILKDAHKIRRQAGDDIFIKVPVTPAGLRAIKALKKEGYHITATAIYTVIQGLLAIEAGADYLAPYYNRMENLNIDSNSVIRQLALAIDRQNSPSKILAASFKNVAQVNNALAAGAHAVTAGADVFESAFAMPSIQKAVDDFSDDWFVIQNSRSI</sequence>
<evidence type="ECO:0000255" key="1">
    <source>
        <dbReference type="HAMAP-Rule" id="MF_00496"/>
    </source>
</evidence>
<name>FSA_STRPJ</name>
<protein>
    <recommendedName>
        <fullName evidence="1">Probable fructose-6-phosphate aldolase</fullName>
        <ecNumber evidence="1">4.1.2.-</ecNumber>
    </recommendedName>
</protein>